<gene>
    <name evidence="2" type="primary">adk</name>
    <name type="synonym">dnaW</name>
    <name type="synonym">plsA</name>
    <name type="ordered locus">Z0591</name>
    <name type="ordered locus">ECs0527</name>
</gene>
<organism>
    <name type="scientific">Escherichia coli O157:H7</name>
    <dbReference type="NCBI Taxonomy" id="83334"/>
    <lineage>
        <taxon>Bacteria</taxon>
        <taxon>Pseudomonadati</taxon>
        <taxon>Pseudomonadota</taxon>
        <taxon>Gammaproteobacteria</taxon>
        <taxon>Enterobacterales</taxon>
        <taxon>Enterobacteriaceae</taxon>
        <taxon>Escherichia</taxon>
    </lineage>
</organism>
<feature type="chain" id="PRO_0000158768" description="Adenylate kinase">
    <location>
        <begin position="1"/>
        <end position="214"/>
    </location>
</feature>
<feature type="region of interest" description="NMP" evidence="2">
    <location>
        <begin position="30"/>
        <end position="59"/>
    </location>
</feature>
<feature type="region of interest" description="LID">
    <location>
        <begin position="122"/>
        <end position="159"/>
    </location>
</feature>
<feature type="binding site" evidence="2">
    <location>
        <begin position="10"/>
        <end position="15"/>
    </location>
    <ligand>
        <name>ATP</name>
        <dbReference type="ChEBI" id="CHEBI:30616"/>
    </ligand>
</feature>
<feature type="binding site" evidence="2">
    <location>
        <position position="31"/>
    </location>
    <ligand>
        <name>AMP</name>
        <dbReference type="ChEBI" id="CHEBI:456215"/>
    </ligand>
</feature>
<feature type="binding site" evidence="2">
    <location>
        <position position="36"/>
    </location>
    <ligand>
        <name>AMP</name>
        <dbReference type="ChEBI" id="CHEBI:456215"/>
    </ligand>
</feature>
<feature type="binding site" evidence="2">
    <location>
        <begin position="57"/>
        <end position="59"/>
    </location>
    <ligand>
        <name>AMP</name>
        <dbReference type="ChEBI" id="CHEBI:456215"/>
    </ligand>
</feature>
<feature type="binding site" evidence="2">
    <location>
        <begin position="85"/>
        <end position="88"/>
    </location>
    <ligand>
        <name>AMP</name>
        <dbReference type="ChEBI" id="CHEBI:456215"/>
    </ligand>
</feature>
<feature type="binding site" evidence="2">
    <location>
        <position position="92"/>
    </location>
    <ligand>
        <name>AMP</name>
        <dbReference type="ChEBI" id="CHEBI:456215"/>
    </ligand>
</feature>
<feature type="binding site" evidence="2">
    <location>
        <position position="123"/>
    </location>
    <ligand>
        <name>ATP</name>
        <dbReference type="ChEBI" id="CHEBI:30616"/>
    </ligand>
</feature>
<feature type="binding site" evidence="2">
    <location>
        <begin position="132"/>
        <end position="133"/>
    </location>
    <ligand>
        <name>ATP</name>
        <dbReference type="ChEBI" id="CHEBI:30616"/>
    </ligand>
</feature>
<feature type="binding site" evidence="2">
    <location>
        <position position="156"/>
    </location>
    <ligand>
        <name>AMP</name>
        <dbReference type="ChEBI" id="CHEBI:456215"/>
    </ligand>
</feature>
<feature type="binding site" evidence="2">
    <location>
        <position position="167"/>
    </location>
    <ligand>
        <name>AMP</name>
        <dbReference type="ChEBI" id="CHEBI:456215"/>
    </ligand>
</feature>
<feature type="binding site" evidence="2">
    <location>
        <position position="200"/>
    </location>
    <ligand>
        <name>ATP</name>
        <dbReference type="ChEBI" id="CHEBI:30616"/>
    </ligand>
</feature>
<feature type="modified residue" description="N6-acetyllysine" evidence="1">
    <location>
        <position position="192"/>
    </location>
</feature>
<accession>P69442</accession>
<accession>P05082</accession>
<accession>P77123</accession>
<keyword id="KW-0007">Acetylation</keyword>
<keyword id="KW-0067">ATP-binding</keyword>
<keyword id="KW-0963">Cytoplasm</keyword>
<keyword id="KW-0418">Kinase</keyword>
<keyword id="KW-0545">Nucleotide biosynthesis</keyword>
<keyword id="KW-0547">Nucleotide-binding</keyword>
<keyword id="KW-1185">Reference proteome</keyword>
<keyword id="KW-0808">Transferase</keyword>
<reference key="1">
    <citation type="journal article" date="2001" name="Nature">
        <title>Genome sequence of enterohaemorrhagic Escherichia coli O157:H7.</title>
        <authorList>
            <person name="Perna N.T."/>
            <person name="Plunkett G. III"/>
            <person name="Burland V."/>
            <person name="Mau B."/>
            <person name="Glasner J.D."/>
            <person name="Rose D.J."/>
            <person name="Mayhew G.F."/>
            <person name="Evans P.S."/>
            <person name="Gregor J."/>
            <person name="Kirkpatrick H.A."/>
            <person name="Posfai G."/>
            <person name="Hackett J."/>
            <person name="Klink S."/>
            <person name="Boutin A."/>
            <person name="Shao Y."/>
            <person name="Miller L."/>
            <person name="Grotbeck E.J."/>
            <person name="Davis N.W."/>
            <person name="Lim A."/>
            <person name="Dimalanta E.T."/>
            <person name="Potamousis K."/>
            <person name="Apodaca J."/>
            <person name="Anantharaman T.S."/>
            <person name="Lin J."/>
            <person name="Yen G."/>
            <person name="Schwartz D.C."/>
            <person name="Welch R.A."/>
            <person name="Blattner F.R."/>
        </authorList>
    </citation>
    <scope>NUCLEOTIDE SEQUENCE [LARGE SCALE GENOMIC DNA]</scope>
    <source>
        <strain>O157:H7 / EDL933 / ATCC 700927 / EHEC</strain>
    </source>
</reference>
<reference key="2">
    <citation type="journal article" date="2001" name="DNA Res.">
        <title>Complete genome sequence of enterohemorrhagic Escherichia coli O157:H7 and genomic comparison with a laboratory strain K-12.</title>
        <authorList>
            <person name="Hayashi T."/>
            <person name="Makino K."/>
            <person name="Ohnishi M."/>
            <person name="Kurokawa K."/>
            <person name="Ishii K."/>
            <person name="Yokoyama K."/>
            <person name="Han C.-G."/>
            <person name="Ohtsubo E."/>
            <person name="Nakayama K."/>
            <person name="Murata T."/>
            <person name="Tanaka M."/>
            <person name="Tobe T."/>
            <person name="Iida T."/>
            <person name="Takami H."/>
            <person name="Honda T."/>
            <person name="Sasakawa C."/>
            <person name="Ogasawara N."/>
            <person name="Yasunaga T."/>
            <person name="Kuhara S."/>
            <person name="Shiba T."/>
            <person name="Hattori M."/>
            <person name="Shinagawa H."/>
        </authorList>
    </citation>
    <scope>NUCLEOTIDE SEQUENCE [LARGE SCALE GENOMIC DNA]</scope>
    <source>
        <strain>O157:H7 / Sakai / RIMD 0509952 / EHEC</strain>
    </source>
</reference>
<protein>
    <recommendedName>
        <fullName evidence="2">Adenylate kinase</fullName>
        <shortName evidence="2">AK</shortName>
        <ecNumber evidence="2">2.7.4.3</ecNumber>
    </recommendedName>
    <alternativeName>
        <fullName evidence="2">ATP-AMP transphosphorylase</fullName>
    </alternativeName>
    <alternativeName>
        <fullName evidence="2">ATP:AMP phosphotransferase</fullName>
    </alternativeName>
    <alternativeName>
        <fullName evidence="2">Adenylate monophosphate kinase</fullName>
    </alternativeName>
</protein>
<proteinExistence type="inferred from homology"/>
<sequence length="214" mass="23586">MRIILLGAPGAGKGTQAQFIMEKYGIPQISTGDMLRAAVKSGSELGKQAKDIMDAGKLVTDELVIALVKERIAQEDCRNGFLLDGFPRTIPQADAMKEAGINVDYVLEFDVPDELIVDRIVGRRVHAPSGRVYHVKFNPPKVEGKDDVTGEELTTRKDDQEETVRKRLVEYHQMTAPLIGYYSKEAEAGNTKYAKVDGTKPVAEVRADLEKILG</sequence>
<evidence type="ECO:0000250" key="1"/>
<evidence type="ECO:0000255" key="2">
    <source>
        <dbReference type="HAMAP-Rule" id="MF_00235"/>
    </source>
</evidence>
<evidence type="ECO:0000305" key="3"/>
<dbReference type="EC" id="2.7.4.3" evidence="2"/>
<dbReference type="EMBL" id="AE005174">
    <property type="protein sequence ID" value="AAG54823.1"/>
    <property type="molecule type" value="Genomic_DNA"/>
</dbReference>
<dbReference type="EMBL" id="BA000007">
    <property type="protein sequence ID" value="BAB33950.2"/>
    <property type="status" value="ALT_INIT"/>
    <property type="molecule type" value="Genomic_DNA"/>
</dbReference>
<dbReference type="PIR" id="C85545">
    <property type="entry name" value="C85545"/>
</dbReference>
<dbReference type="PIR" id="G90694">
    <property type="entry name" value="G90694"/>
</dbReference>
<dbReference type="RefSeq" id="NP_308554.1">
    <property type="nucleotide sequence ID" value="NC_002695.1"/>
</dbReference>
<dbReference type="RefSeq" id="WP_001220233.1">
    <property type="nucleotide sequence ID" value="NZ_VOAI01000005.1"/>
</dbReference>
<dbReference type="SMR" id="P69442"/>
<dbReference type="STRING" id="155864.Z0591"/>
<dbReference type="GeneID" id="75170492"/>
<dbReference type="GeneID" id="914631"/>
<dbReference type="KEGG" id="ece:Z0591"/>
<dbReference type="KEGG" id="ecs:ECs_0527"/>
<dbReference type="PATRIC" id="fig|386585.9.peg.634"/>
<dbReference type="eggNOG" id="COG0563">
    <property type="taxonomic scope" value="Bacteria"/>
</dbReference>
<dbReference type="HOGENOM" id="CLU_032354_1_2_6"/>
<dbReference type="UniPathway" id="UPA00588">
    <property type="reaction ID" value="UER00649"/>
</dbReference>
<dbReference type="Proteomes" id="UP000000558">
    <property type="component" value="Chromosome"/>
</dbReference>
<dbReference type="Proteomes" id="UP000002519">
    <property type="component" value="Chromosome"/>
</dbReference>
<dbReference type="GO" id="GO:0005737">
    <property type="term" value="C:cytoplasm"/>
    <property type="evidence" value="ECO:0007669"/>
    <property type="project" value="UniProtKB-SubCell"/>
</dbReference>
<dbReference type="GO" id="GO:0004017">
    <property type="term" value="F:adenylate kinase activity"/>
    <property type="evidence" value="ECO:0007669"/>
    <property type="project" value="UniProtKB-UniRule"/>
</dbReference>
<dbReference type="GO" id="GO:0005524">
    <property type="term" value="F:ATP binding"/>
    <property type="evidence" value="ECO:0007669"/>
    <property type="project" value="UniProtKB-UniRule"/>
</dbReference>
<dbReference type="GO" id="GO:0044209">
    <property type="term" value="P:AMP salvage"/>
    <property type="evidence" value="ECO:0007669"/>
    <property type="project" value="UniProtKB-UniRule"/>
</dbReference>
<dbReference type="CDD" id="cd01428">
    <property type="entry name" value="ADK"/>
    <property type="match status" value="1"/>
</dbReference>
<dbReference type="FunFam" id="3.40.50.300:FF:000106">
    <property type="entry name" value="Adenylate kinase mitochondrial"/>
    <property type="match status" value="1"/>
</dbReference>
<dbReference type="Gene3D" id="3.40.50.300">
    <property type="entry name" value="P-loop containing nucleotide triphosphate hydrolases"/>
    <property type="match status" value="1"/>
</dbReference>
<dbReference type="HAMAP" id="MF_00235">
    <property type="entry name" value="Adenylate_kinase_Adk"/>
    <property type="match status" value="1"/>
</dbReference>
<dbReference type="InterPro" id="IPR006259">
    <property type="entry name" value="Adenyl_kin_sub"/>
</dbReference>
<dbReference type="InterPro" id="IPR000850">
    <property type="entry name" value="Adenylat/UMP-CMP_kin"/>
</dbReference>
<dbReference type="InterPro" id="IPR033690">
    <property type="entry name" value="Adenylat_kinase_CS"/>
</dbReference>
<dbReference type="InterPro" id="IPR007862">
    <property type="entry name" value="Adenylate_kinase_lid-dom"/>
</dbReference>
<dbReference type="InterPro" id="IPR027417">
    <property type="entry name" value="P-loop_NTPase"/>
</dbReference>
<dbReference type="NCBIfam" id="TIGR01351">
    <property type="entry name" value="adk"/>
    <property type="match status" value="1"/>
</dbReference>
<dbReference type="NCBIfam" id="NF001379">
    <property type="entry name" value="PRK00279.1-1"/>
    <property type="match status" value="1"/>
</dbReference>
<dbReference type="NCBIfam" id="NF001380">
    <property type="entry name" value="PRK00279.1-2"/>
    <property type="match status" value="1"/>
</dbReference>
<dbReference type="NCBIfam" id="NF001381">
    <property type="entry name" value="PRK00279.1-3"/>
    <property type="match status" value="1"/>
</dbReference>
<dbReference type="NCBIfam" id="NF011100">
    <property type="entry name" value="PRK14527.1"/>
    <property type="match status" value="1"/>
</dbReference>
<dbReference type="PANTHER" id="PTHR23359">
    <property type="entry name" value="NUCLEOTIDE KINASE"/>
    <property type="match status" value="1"/>
</dbReference>
<dbReference type="Pfam" id="PF00406">
    <property type="entry name" value="ADK"/>
    <property type="match status" value="1"/>
</dbReference>
<dbReference type="Pfam" id="PF05191">
    <property type="entry name" value="ADK_lid"/>
    <property type="match status" value="1"/>
</dbReference>
<dbReference type="PRINTS" id="PR00094">
    <property type="entry name" value="ADENYLTKNASE"/>
</dbReference>
<dbReference type="SUPFAM" id="SSF52540">
    <property type="entry name" value="P-loop containing nucleoside triphosphate hydrolases"/>
    <property type="match status" value="1"/>
</dbReference>
<dbReference type="PROSITE" id="PS00113">
    <property type="entry name" value="ADENYLATE_KINASE"/>
    <property type="match status" value="1"/>
</dbReference>
<name>KAD_ECO57</name>
<comment type="function">
    <text evidence="2">Catalyzes the reversible transfer of the terminal phosphate group between ATP and AMP. Plays an important role in cellular energy homeostasis and in adenine nucleotide metabolism.</text>
</comment>
<comment type="catalytic activity">
    <reaction evidence="2">
        <text>AMP + ATP = 2 ADP</text>
        <dbReference type="Rhea" id="RHEA:12973"/>
        <dbReference type="ChEBI" id="CHEBI:30616"/>
        <dbReference type="ChEBI" id="CHEBI:456215"/>
        <dbReference type="ChEBI" id="CHEBI:456216"/>
        <dbReference type="EC" id="2.7.4.3"/>
    </reaction>
</comment>
<comment type="pathway">
    <text evidence="2">Purine metabolism; AMP biosynthesis via salvage pathway; AMP from ADP: step 1/1.</text>
</comment>
<comment type="subunit">
    <text>Monomer.</text>
</comment>
<comment type="subcellular location">
    <subcellularLocation>
        <location evidence="2">Cytoplasm</location>
    </subcellularLocation>
</comment>
<comment type="domain">
    <text evidence="2">Consists of three domains, a large central CORE domain and two small peripheral domains, NMPbind and LID, which undergo movements during catalysis. The LID domain closes over the site of phosphoryl transfer upon ATP binding. Assembling and dissambling the active center during each catalytic cycle provides an effective means to prevent ATP hydrolysis.</text>
</comment>
<comment type="similarity">
    <text evidence="2">Belongs to the adenylate kinase family.</text>
</comment>
<comment type="sequence caution" evidence="3">
    <conflict type="erroneous initiation">
        <sequence resource="EMBL-CDS" id="BAB33950"/>
    </conflict>
    <text>Extended N-terminus.</text>
</comment>